<evidence type="ECO:0000255" key="1">
    <source>
        <dbReference type="HAMAP-Rule" id="MF_04072"/>
    </source>
</evidence>
<evidence type="ECO:0000305" key="2"/>
<evidence type="ECO:0007829" key="3">
    <source>
        <dbReference type="PDB" id="4KPQ"/>
    </source>
</evidence>
<evidence type="ECO:0007829" key="4">
    <source>
        <dbReference type="PDB" id="4KPS"/>
    </source>
</evidence>
<accession>P13103</accession>
<accession>Q0A416</accession>
<organism>
    <name type="scientific">Influenza A virus (strain A/Gull/Maryland/704/1977 H13N6)</name>
    <dbReference type="NCBI Taxonomy" id="384499"/>
    <lineage>
        <taxon>Viruses</taxon>
        <taxon>Riboviria</taxon>
        <taxon>Orthornavirae</taxon>
        <taxon>Negarnaviricota</taxon>
        <taxon>Polyploviricotina</taxon>
        <taxon>Insthoviricetes</taxon>
        <taxon>Articulavirales</taxon>
        <taxon>Orthomyxoviridae</taxon>
        <taxon>Alphainfluenzavirus</taxon>
        <taxon>Alphainfluenzavirus influenzae</taxon>
        <taxon>Influenza A virus</taxon>
    </lineage>
</organism>
<proteinExistence type="evidence at protein level"/>
<organismHost>
    <name type="scientific">Aves</name>
    <dbReference type="NCBI Taxonomy" id="8782"/>
</organismHost>
<feature type="signal peptide" evidence="1">
    <location>
        <begin position="1"/>
        <end position="18"/>
    </location>
</feature>
<feature type="chain" id="PRO_0000440469" description="Hemagglutinin" evidence="1">
    <location>
        <begin position="19"/>
        <end position="566"/>
    </location>
</feature>
<feature type="chain" id="PRO_0000038961" description="Hemagglutinin HA1 chain" evidence="1">
    <location>
        <begin position="19"/>
        <end position="342"/>
    </location>
</feature>
<feature type="chain" id="PRO_0000038962" description="Hemagglutinin HA2 chain" evidence="1">
    <location>
        <begin position="344"/>
        <end position="566"/>
    </location>
</feature>
<feature type="topological domain" description="Extracellular" evidence="1">
    <location>
        <begin position="19"/>
        <end position="532"/>
    </location>
</feature>
<feature type="transmembrane region" description="Helical" evidence="1">
    <location>
        <begin position="533"/>
        <end position="553"/>
    </location>
</feature>
<feature type="topological domain" description="Cytoplasmic" evidence="1">
    <location>
        <begin position="554"/>
        <end position="566"/>
    </location>
</feature>
<feature type="site" description="Cleavage; by host" evidence="1">
    <location>
        <begin position="343"/>
        <end position="344"/>
    </location>
</feature>
<feature type="lipid moiety-binding region" description="S-palmitoyl cysteine; by host" evidence="1">
    <location>
        <position position="555"/>
    </location>
</feature>
<feature type="lipid moiety-binding region" description="S-palmitoyl cysteine; by host" evidence="1">
    <location>
        <position position="565"/>
    </location>
</feature>
<feature type="glycosylation site" description="N-linked (GlcNAc...) asparagine; by host" evidence="1">
    <location>
        <position position="29"/>
    </location>
</feature>
<feature type="glycosylation site" description="N-linked (GlcNAc...) asparagine; by host" evidence="1">
    <location>
        <position position="54"/>
    </location>
</feature>
<feature type="glycosylation site" description="N-linked (GlcNAc...) asparagine; by host" evidence="1">
    <location>
        <position position="182"/>
    </location>
</feature>
<feature type="glycosylation site" description="N-linked (GlcNAc...) asparagine; by host" evidence="1">
    <location>
        <position position="183"/>
    </location>
</feature>
<feature type="glycosylation site" description="N-linked (GlcNAc...) asparagine; by host" evidence="1">
    <location>
        <position position="305"/>
    </location>
</feature>
<feature type="glycosylation site" description="N-linked (GlcNAc...) asparagine; by host" evidence="1">
    <location>
        <position position="488"/>
    </location>
</feature>
<feature type="glycosylation site" description="N-linked (GlcNAc...) asparagine; by host" evidence="1">
    <location>
        <position position="497"/>
    </location>
</feature>
<feature type="disulfide bond" description="Interchain (between HA1 and HA2 chains)" evidence="1">
    <location>
        <begin position="22"/>
        <end position="480"/>
    </location>
</feature>
<feature type="disulfide bond" evidence="1">
    <location>
        <begin position="60"/>
        <end position="291"/>
    </location>
</feature>
<feature type="disulfide bond" evidence="1">
    <location>
        <begin position="73"/>
        <end position="85"/>
    </location>
</feature>
<feature type="disulfide bond" evidence="1">
    <location>
        <begin position="108"/>
        <end position="151"/>
    </location>
</feature>
<feature type="disulfide bond" evidence="1">
    <location>
        <begin position="295"/>
        <end position="319"/>
    </location>
</feature>
<feature type="disulfide bond" evidence="1">
    <location>
        <begin position="487"/>
        <end position="491"/>
    </location>
</feature>
<feature type="sequence conflict" description="In Ref. 2; AAA43214." evidence="2" ref="2">
    <original>V</original>
    <variation>G</variation>
    <location>
        <position position="80"/>
    </location>
</feature>
<feature type="sequence conflict" description="In Ref. 1; BAA14338." evidence="2" ref="1">
    <original>N</original>
    <variation>T</variation>
    <location>
        <position position="172"/>
    </location>
</feature>
<feature type="sequence conflict" description="In Ref. 3; ABI84566." evidence="2" ref="3">
    <original>L</original>
    <variation>F</variation>
    <location>
        <position position="345"/>
    </location>
</feature>
<feature type="strand" evidence="3">
    <location>
        <begin position="20"/>
        <end position="26"/>
    </location>
</feature>
<feature type="strand" evidence="3">
    <location>
        <begin position="40"/>
        <end position="45"/>
    </location>
</feature>
<feature type="strand" evidence="3">
    <location>
        <begin position="47"/>
        <end position="49"/>
    </location>
</feature>
<feature type="strand" evidence="3">
    <location>
        <begin position="57"/>
        <end position="62"/>
    </location>
</feature>
<feature type="helix" evidence="3">
    <location>
        <begin position="75"/>
        <end position="80"/>
    </location>
</feature>
<feature type="strand" evidence="3">
    <location>
        <begin position="104"/>
        <end position="106"/>
    </location>
</feature>
<feature type="strand" evidence="3">
    <location>
        <begin position="108"/>
        <end position="113"/>
    </location>
</feature>
<feature type="helix" evidence="3">
    <location>
        <begin position="116"/>
        <end position="122"/>
    </location>
</feature>
<feature type="strand" evidence="3">
    <location>
        <begin position="126"/>
        <end position="135"/>
    </location>
</feature>
<feature type="turn" evidence="3">
    <location>
        <begin position="137"/>
        <end position="140"/>
    </location>
</feature>
<feature type="strand" evidence="4">
    <location>
        <begin position="144"/>
        <end position="146"/>
    </location>
</feature>
<feature type="strand" evidence="3">
    <location>
        <begin position="148"/>
        <end position="152"/>
    </location>
</feature>
<feature type="strand" evidence="3">
    <location>
        <begin position="154"/>
        <end position="156"/>
    </location>
</feature>
<feature type="strand" evidence="3">
    <location>
        <begin position="162"/>
        <end position="168"/>
    </location>
</feature>
<feature type="strand" evidence="3">
    <location>
        <begin position="177"/>
        <end position="182"/>
    </location>
</feature>
<feature type="strand" evidence="3">
    <location>
        <begin position="185"/>
        <end position="197"/>
    </location>
</feature>
<feature type="helix" evidence="3">
    <location>
        <begin position="201"/>
        <end position="208"/>
    </location>
</feature>
<feature type="strand" evidence="3">
    <location>
        <begin position="210"/>
        <end position="212"/>
    </location>
</feature>
<feature type="strand" evidence="3">
    <location>
        <begin position="214"/>
        <end position="218"/>
    </location>
</feature>
<feature type="strand" evidence="3">
    <location>
        <begin position="223"/>
        <end position="227"/>
    </location>
</feature>
<feature type="strand" evidence="3">
    <location>
        <begin position="241"/>
        <end position="250"/>
    </location>
</feature>
<feature type="strand" evidence="3">
    <location>
        <begin position="255"/>
        <end position="267"/>
    </location>
</feature>
<feature type="strand" evidence="3">
    <location>
        <begin position="269"/>
        <end position="277"/>
    </location>
</feature>
<feature type="strand" evidence="3">
    <location>
        <begin position="287"/>
        <end position="299"/>
    </location>
</feature>
<feature type="strand" evidence="3">
    <location>
        <begin position="307"/>
        <end position="309"/>
    </location>
</feature>
<feature type="strand" evidence="3">
    <location>
        <begin position="315"/>
        <end position="318"/>
    </location>
</feature>
<feature type="strand" evidence="3">
    <location>
        <begin position="329"/>
        <end position="331"/>
    </location>
</feature>
<feature type="turn" evidence="3">
    <location>
        <begin position="350"/>
        <end position="352"/>
    </location>
</feature>
<feature type="strand" evidence="3">
    <location>
        <begin position="364"/>
        <end position="371"/>
    </location>
</feature>
<feature type="strand" evidence="3">
    <location>
        <begin position="377"/>
        <end position="379"/>
    </location>
</feature>
<feature type="helix" evidence="3">
    <location>
        <begin position="381"/>
        <end position="400"/>
    </location>
</feature>
<feature type="helix" evidence="3">
    <location>
        <begin position="418"/>
        <end position="469"/>
    </location>
</feature>
<feature type="helix" evidence="3">
    <location>
        <begin position="470"/>
        <end position="472"/>
    </location>
</feature>
<feature type="strand" evidence="3">
    <location>
        <begin position="473"/>
        <end position="475"/>
    </location>
</feature>
<feature type="strand" evidence="3">
    <location>
        <begin position="477"/>
        <end position="485"/>
    </location>
</feature>
<feature type="helix" evidence="3">
    <location>
        <begin position="489"/>
        <end position="496"/>
    </location>
</feature>
<feature type="turn" evidence="3">
    <location>
        <begin position="503"/>
        <end position="508"/>
    </location>
</feature>
<gene>
    <name evidence="1" type="primary">HA</name>
</gene>
<dbReference type="EMBL" id="D90308">
    <property type="protein sequence ID" value="BAA14338.1"/>
    <property type="molecule type" value="Genomic_RNA"/>
</dbReference>
<dbReference type="EMBL" id="M26090">
    <property type="protein sequence ID" value="AAA43214.1"/>
    <property type="molecule type" value="Genomic_RNA"/>
</dbReference>
<dbReference type="EMBL" id="CY014694">
    <property type="protein sequence ID" value="ABI84566.1"/>
    <property type="molecule type" value="Genomic_RNA"/>
</dbReference>
<dbReference type="PIR" id="A32664">
    <property type="entry name" value="HMIVT1"/>
</dbReference>
<dbReference type="PIR" id="C39987">
    <property type="entry name" value="HMIVGM"/>
</dbReference>
<dbReference type="PDB" id="4KPQ">
    <property type="method" value="X-ray"/>
    <property type="resolution" value="2.50 A"/>
    <property type="chains" value="A/C/E=19-343, B/D/F=344-518"/>
</dbReference>
<dbReference type="PDB" id="4KPS">
    <property type="method" value="X-ray"/>
    <property type="resolution" value="2.59 A"/>
    <property type="chains" value="A/C/E=19-340, B/D/F=345-509"/>
</dbReference>
<dbReference type="PDBsum" id="4KPQ"/>
<dbReference type="PDBsum" id="4KPS"/>
<dbReference type="SMR" id="P13103"/>
<dbReference type="GlyCosmos" id="P13103">
    <property type="glycosylation" value="7 sites, No reported glycans"/>
</dbReference>
<dbReference type="EvolutionaryTrace" id="P13103"/>
<dbReference type="PRO" id="PR:P13103"/>
<dbReference type="Proteomes" id="UP000000828">
    <property type="component" value="Genome"/>
</dbReference>
<dbReference type="GO" id="GO:0020002">
    <property type="term" value="C:host cell plasma membrane"/>
    <property type="evidence" value="ECO:0007669"/>
    <property type="project" value="UniProtKB-SubCell"/>
</dbReference>
<dbReference type="GO" id="GO:0016020">
    <property type="term" value="C:membrane"/>
    <property type="evidence" value="ECO:0007669"/>
    <property type="project" value="UniProtKB-UniRule"/>
</dbReference>
<dbReference type="GO" id="GO:0019031">
    <property type="term" value="C:viral envelope"/>
    <property type="evidence" value="ECO:0007669"/>
    <property type="project" value="UniProtKB-UniRule"/>
</dbReference>
<dbReference type="GO" id="GO:0055036">
    <property type="term" value="C:virion membrane"/>
    <property type="evidence" value="ECO:0007669"/>
    <property type="project" value="UniProtKB-SubCell"/>
</dbReference>
<dbReference type="GO" id="GO:0046789">
    <property type="term" value="F:host cell surface receptor binding"/>
    <property type="evidence" value="ECO:0007669"/>
    <property type="project" value="UniProtKB-UniRule"/>
</dbReference>
<dbReference type="GO" id="GO:0075512">
    <property type="term" value="P:clathrin-dependent endocytosis of virus by host cell"/>
    <property type="evidence" value="ECO:0007669"/>
    <property type="project" value="UniProtKB-UniRule"/>
</dbReference>
<dbReference type="GO" id="GO:0039654">
    <property type="term" value="P:fusion of virus membrane with host endosome membrane"/>
    <property type="evidence" value="ECO:0007669"/>
    <property type="project" value="UniProtKB-UniRule"/>
</dbReference>
<dbReference type="GO" id="GO:0019064">
    <property type="term" value="P:fusion of virus membrane with host plasma membrane"/>
    <property type="evidence" value="ECO:0007669"/>
    <property type="project" value="InterPro"/>
</dbReference>
<dbReference type="GO" id="GO:0046761">
    <property type="term" value="P:viral budding from plasma membrane"/>
    <property type="evidence" value="ECO:0007669"/>
    <property type="project" value="UniProtKB-UniRule"/>
</dbReference>
<dbReference type="GO" id="GO:0019062">
    <property type="term" value="P:virion attachment to host cell"/>
    <property type="evidence" value="ECO:0007669"/>
    <property type="project" value="UniProtKB-KW"/>
</dbReference>
<dbReference type="Gene3D" id="3.90.20.10">
    <property type="match status" value="1"/>
</dbReference>
<dbReference type="Gene3D" id="3.90.209.20">
    <property type="match status" value="1"/>
</dbReference>
<dbReference type="HAMAP" id="MF_04072">
    <property type="entry name" value="INFV_HEMA"/>
    <property type="match status" value="1"/>
</dbReference>
<dbReference type="InterPro" id="IPR008980">
    <property type="entry name" value="Capsid_hemagglutn"/>
</dbReference>
<dbReference type="InterPro" id="IPR013828">
    <property type="entry name" value="Hemagglutn_HA1_a/b_dom_sf"/>
</dbReference>
<dbReference type="InterPro" id="IPR000149">
    <property type="entry name" value="Hemagglutn_influenz_A"/>
</dbReference>
<dbReference type="InterPro" id="IPR001364">
    <property type="entry name" value="Hemagglutn_influenz_A/B"/>
</dbReference>
<dbReference type="Pfam" id="PF00509">
    <property type="entry name" value="Hemagglutinin"/>
    <property type="match status" value="1"/>
</dbReference>
<dbReference type="PRINTS" id="PR00330">
    <property type="entry name" value="HEMAGGLUTN1"/>
</dbReference>
<dbReference type="PRINTS" id="PR00329">
    <property type="entry name" value="HEMAGGLUTN12"/>
</dbReference>
<dbReference type="SUPFAM" id="SSF58064">
    <property type="entry name" value="Influenza hemagglutinin (stalk)"/>
    <property type="match status" value="1"/>
</dbReference>
<dbReference type="SUPFAM" id="SSF49818">
    <property type="entry name" value="Viral protein domain"/>
    <property type="match status" value="1"/>
</dbReference>
<keyword id="KW-0002">3D-structure</keyword>
<keyword id="KW-1167">Clathrin- and caveolin-independent endocytosis of virus by host</keyword>
<keyword id="KW-1165">Clathrin-mediated endocytosis of virus by host</keyword>
<keyword id="KW-1015">Disulfide bond</keyword>
<keyword id="KW-1170">Fusion of virus membrane with host endosomal membrane</keyword>
<keyword id="KW-1168">Fusion of virus membrane with host membrane</keyword>
<keyword id="KW-0325">Glycoprotein</keyword>
<keyword id="KW-0348">Hemagglutinin</keyword>
<keyword id="KW-1032">Host cell membrane</keyword>
<keyword id="KW-1043">Host membrane</keyword>
<keyword id="KW-0945">Host-virus interaction</keyword>
<keyword id="KW-0449">Lipoprotein</keyword>
<keyword id="KW-0472">Membrane</keyword>
<keyword id="KW-0564">Palmitate</keyword>
<keyword id="KW-0732">Signal</keyword>
<keyword id="KW-0812">Transmembrane</keyword>
<keyword id="KW-1133">Transmembrane helix</keyword>
<keyword id="KW-1161">Viral attachment to host cell</keyword>
<keyword id="KW-0261">Viral envelope protein</keyword>
<keyword id="KW-1162">Viral penetration into host cytoplasm</keyword>
<keyword id="KW-0946">Virion</keyword>
<keyword id="KW-1164">Virus endocytosis by host</keyword>
<keyword id="KW-1160">Virus entry into host cell</keyword>
<reference key="1">
    <citation type="journal article" date="1991" name="Virology">
        <title>Comparison of complete amino acid sequences and receptor-binding properties among 13 serotypes of hemagglutinins of influenza A viruses.</title>
        <authorList>
            <person name="Nobusawa E."/>
            <person name="Aoyama T."/>
            <person name="Kato H."/>
            <person name="Suzuki Y."/>
            <person name="Tateno Y."/>
            <person name="Nakajima K."/>
        </authorList>
    </citation>
    <scope>NUCLEOTIDE SEQUENCE [GENOMIC RNA]</scope>
</reference>
<reference key="2">
    <citation type="journal article" date="1989" name="Virology">
        <title>Antigenic and molecular characterization of subtype H13 hemagglutinin of influenza virus.</title>
        <authorList>
            <person name="Chambers T.M."/>
            <person name="Yamnikova S."/>
            <person name="Kawaoka Y."/>
            <person name="Lvov D.K."/>
            <person name="Webster R.G."/>
        </authorList>
    </citation>
    <scope>NUCLEOTIDE SEQUENCE [GENOMIC RNA]</scope>
</reference>
<reference key="3">
    <citation type="journal article" date="2006" name="Science">
        <title>Large-scale sequence analysis of avian influenza isolates.</title>
        <authorList>
            <person name="Obenauer J.C."/>
            <person name="Denson J."/>
            <person name="Mehta P.K."/>
            <person name="Su X."/>
            <person name="Mukatira S."/>
            <person name="Finkelstein D.B."/>
            <person name="Xu X."/>
            <person name="Wang J."/>
            <person name="Ma J."/>
            <person name="Fan Y."/>
            <person name="Rakestraw K.M."/>
            <person name="Webster R.G."/>
            <person name="Hoffmann E."/>
            <person name="Krauss S."/>
            <person name="Zheng J."/>
            <person name="Zhang Z."/>
            <person name="Naeve C.W."/>
        </authorList>
    </citation>
    <scope>NUCLEOTIDE SEQUENCE [GENOMIC RNA]</scope>
</reference>
<sequence length="566" mass="63308">MALNVIATLTLISVCVHADRICVGYLSTNSSERVDTLLENGVPVTSSIDLIETNHTGTYCSLNGVSPVHLGDCSFEGWIVGNPACTSNFGIREWSYLIEDPAAPHGLCYPGELNNNGELRHLFSGIRSFSRTELIPPTSWGEVLDGTTSACRDNTGTNSFYRNLVWFIKKNNRYPVISKTYNNTTGRDVLVLWGIHHPVSVDETKTLYVNSDPYTLVSTKSWSEKYKLETGVRPGYNGQRSWMKIYWSLIHPGEMITFESNGGFLAPRYGYIIEEYGKGRIFQSRIRMSRCNTKCQTSVGGINTNRTFQNIDKNALGDCPKYIKSGQLKLATGLRNVPAISNRGLFGAIAGFIEGGWPGLINGWYGFQHQNEQGTGIAADKESTQKAIDQITTKINNIIDKMNGNYDSIRGEFNQVEKRINMLADRIDDAVTDIWSYNAKLLVLLENDKTLDMHDANVKNLHEQVRRELKDNAIDEGNGCFELLHKCNDSCMETIRNGTYDHTEYAEESKLKRQEIDGIKLKSEDNVYKALSIYSCIASSVVLVGLILSFIMWACSSGNCRFNVCI</sequence>
<name>HEMA_I77AF</name>
<protein>
    <recommendedName>
        <fullName evidence="1">Hemagglutinin</fullName>
    </recommendedName>
    <component>
        <recommendedName>
            <fullName evidence="1">Hemagglutinin HA1 chain</fullName>
        </recommendedName>
    </component>
    <component>
        <recommendedName>
            <fullName evidence="1">Hemagglutinin HA2 chain</fullName>
        </recommendedName>
    </component>
</protein>
<comment type="function">
    <text>Binds to sialic acid-containing receptors on the cell surface, bringing about the attachment of the virus particle to the cell. This attachment induces virion internalization of about two third of the virus particles through clathrin-dependent endocytosis and about one third through a clathrin- and caveolin-independent pathway. Plays a major role in the determination of host range restriction and virulence. Class I viral fusion protein. Responsible for penetration of the virus into the cell cytoplasm by mediating the fusion of the membrane of the endocytosed virus particle with the endosomal membrane. Low pH in endosomes induces an irreversible conformational change in HA2, releasing the fusion hydrophobic peptide. Several trimers are required to form a competent fusion pore.</text>
</comment>
<comment type="function">
    <text evidence="1">Binds to sialic acid-containing receptors on the cell surface, bringing about the attachment of the virus particle to the cell. This attachment induces virion internalization either through clathrin-dependent endocytosis or through clathrin- and caveolin-independent pathway. Plays a major role in the determination of host range restriction and virulence. Class I viral fusion protein. Responsible for penetration of the virus into the cell cytoplasm by mediating the fusion of the membrane of the endocytosed virus particle with the endosomal membrane. Low pH in endosomes induces an irreversible conformational change in HA2, releasing the fusion hydrophobic peptide. Several trimers are required to form a competent fusion pore.</text>
</comment>
<comment type="subunit">
    <text evidence="1">Homotrimer of disulfide-linked HA1-HA2.</text>
</comment>
<comment type="subcellular location">
    <subcellularLocation>
        <location evidence="1">Virion membrane</location>
        <topology evidence="1">Single-pass type I membrane protein</topology>
    </subcellularLocation>
    <subcellularLocation>
        <location evidence="1">Host apical cell membrane</location>
        <topology evidence="1">Single-pass type I membrane protein</topology>
    </subcellularLocation>
    <text evidence="1">Targeted to the apical plasma membrane in epithelial polarized cells through a signal present in the transmembrane domain. Associated with glycosphingolipid- and cholesterol-enriched detergent-resistant lipid rafts.</text>
</comment>
<comment type="PTM">
    <text evidence="1">Palmitoylated.</text>
</comment>
<comment type="PTM">
    <text evidence="1">In natural infection, inactive HA is matured into HA1 and HA2 outside the cell by one or more trypsin-like, arginine-specific endoprotease secreted by the bronchial epithelial cells. One identified protease that may be involved in this process is secreted in lungs by club cells.</text>
</comment>
<comment type="miscellaneous">
    <text>Major glycoprotein, comprises over 80% of the envelope proteins present in virus particle.</text>
</comment>
<comment type="miscellaneous">
    <text>The extent of infection into host organism is determined by HA. Influenza viruses bud from the apical surface of polarized epithelial cells (e.g. bronchial epithelial cells) into lumen of lungs and are therefore usually pneumotropic. The reason is that HA is cleaved by tryptase clara which is restricted to lungs. However, HAs of H5 and H7 pantropic avian viruses subtypes can be cleaved by furin and subtilisin-type enzymes, allowing the virus to grow in other organs than lungs.</text>
</comment>
<comment type="miscellaneous">
    <text evidence="2">The influenza A genome consist of 8 RNA segments. Genetic variation of hemagglutinin and/or neuraminidase genes results in the emergence of new influenza strains. The mechanism of variation can be the result of point mutations or the result of genetic reassortment between segments of two different strains.</text>
</comment>
<comment type="similarity">
    <text evidence="1">Belongs to the influenza viruses hemagglutinin family.</text>
</comment>